<reference key="1">
    <citation type="journal article" date="2004" name="J. Mol. Microbiol. Biotechnol.">
        <title>The complete genome sequence of Bacillus licheniformis DSM13, an organism with great industrial potential.</title>
        <authorList>
            <person name="Veith B."/>
            <person name="Herzberg C."/>
            <person name="Steckel S."/>
            <person name="Feesche J."/>
            <person name="Maurer K.H."/>
            <person name="Ehrenreich P."/>
            <person name="Baeumer S."/>
            <person name="Henne A."/>
            <person name="Liesegang H."/>
            <person name="Merkl R."/>
            <person name="Ehrenreich A."/>
            <person name="Gottschalk G."/>
        </authorList>
    </citation>
    <scope>NUCLEOTIDE SEQUENCE [LARGE SCALE GENOMIC DNA]</scope>
    <source>
        <strain>ATCC 14580 / DSM 13 / JCM 2505 / CCUG 7422 / NBRC 12200 / NCIMB 9375 / NCTC 10341 / NRRL NRS-1264 / Gibson 46</strain>
    </source>
</reference>
<reference key="2">
    <citation type="journal article" date="2004" name="Genome Biol.">
        <title>Complete genome sequence of the industrial bacterium Bacillus licheniformis and comparisons with closely related Bacillus species.</title>
        <authorList>
            <person name="Rey M.W."/>
            <person name="Ramaiya P."/>
            <person name="Nelson B.A."/>
            <person name="Brody-Karpin S.D."/>
            <person name="Zaretsky E.J."/>
            <person name="Tang M."/>
            <person name="Lopez de Leon A."/>
            <person name="Xiang H."/>
            <person name="Gusti V."/>
            <person name="Clausen I.G."/>
            <person name="Olsen P.B."/>
            <person name="Rasmussen M.D."/>
            <person name="Andersen J.T."/>
            <person name="Joergensen P.L."/>
            <person name="Larsen T.S."/>
            <person name="Sorokin A."/>
            <person name="Bolotin A."/>
            <person name="Lapidus A."/>
            <person name="Galleron N."/>
            <person name="Ehrlich S.D."/>
            <person name="Berka R.M."/>
        </authorList>
    </citation>
    <scope>NUCLEOTIDE SEQUENCE [LARGE SCALE GENOMIC DNA]</scope>
    <source>
        <strain>ATCC 14580 / DSM 13 / JCM 2505 / CCUG 7422 / NBRC 12200 / NCIMB 9375 / NCTC 10341 / NRRL NRS-1264 / Gibson 46</strain>
    </source>
</reference>
<evidence type="ECO:0000250" key="1"/>
<evidence type="ECO:0000255" key="2"/>
<evidence type="ECO:0000305" key="3"/>
<organism>
    <name type="scientific">Bacillus licheniformis (strain ATCC 14580 / DSM 13 / JCM 2505 / CCUG 7422 / NBRC 12200 / NCIMB 9375 / NCTC 10341 / NRRL NRS-1264 / Gibson 46)</name>
    <dbReference type="NCBI Taxonomy" id="279010"/>
    <lineage>
        <taxon>Bacteria</taxon>
        <taxon>Bacillati</taxon>
        <taxon>Bacillota</taxon>
        <taxon>Bacilli</taxon>
        <taxon>Bacillales</taxon>
        <taxon>Bacillaceae</taxon>
        <taxon>Bacillus</taxon>
    </lineage>
</organism>
<protein>
    <recommendedName>
        <fullName>L-cystine uptake protein TcyP</fullName>
    </recommendedName>
    <alternativeName>
        <fullName>Transporter of cystine TcyP</fullName>
    </alternativeName>
</protein>
<keyword id="KW-0029">Amino-acid transport</keyword>
<keyword id="KW-0472">Membrane</keyword>
<keyword id="KW-1185">Reference proteome</keyword>
<keyword id="KW-0812">Transmembrane</keyword>
<keyword id="KW-1133">Transmembrane helix</keyword>
<keyword id="KW-0813">Transport</keyword>
<feature type="chain" id="PRO_0000279740" description="L-cystine uptake protein TcyP">
    <location>
        <begin position="1"/>
        <end position="461"/>
    </location>
</feature>
<feature type="transmembrane region" description="Helical" evidence="2">
    <location>
        <begin position="1"/>
        <end position="21"/>
    </location>
</feature>
<feature type="transmembrane region" description="Helical" evidence="2">
    <location>
        <begin position="33"/>
        <end position="53"/>
    </location>
</feature>
<feature type="transmembrane region" description="Helical" evidence="2">
    <location>
        <begin position="72"/>
        <end position="92"/>
    </location>
</feature>
<feature type="transmembrane region" description="Helical" evidence="2">
    <location>
        <begin position="104"/>
        <end position="124"/>
    </location>
</feature>
<feature type="transmembrane region" description="Helical" evidence="2">
    <location>
        <begin position="183"/>
        <end position="203"/>
    </location>
</feature>
<feature type="transmembrane region" description="Helical" evidence="2">
    <location>
        <begin position="224"/>
        <end position="244"/>
    </location>
</feature>
<feature type="transmembrane region" description="Helical" evidence="2">
    <location>
        <begin position="262"/>
        <end position="282"/>
    </location>
</feature>
<feature type="transmembrane region" description="Helical" evidence="2">
    <location>
        <begin position="337"/>
        <end position="357"/>
    </location>
</feature>
<feature type="transmembrane region" description="Helical" evidence="2">
    <location>
        <begin position="369"/>
        <end position="389"/>
    </location>
</feature>
<feature type="transmembrane region" description="Helical" evidence="2">
    <location>
        <begin position="393"/>
        <end position="413"/>
    </location>
</feature>
<name>TCYP_BACLD</name>
<proteinExistence type="inferred from homology"/>
<dbReference type="EMBL" id="AE017333">
    <property type="protein sequence ID" value="AAU39883.1"/>
    <property type="molecule type" value="Genomic_DNA"/>
</dbReference>
<dbReference type="EMBL" id="CP000002">
    <property type="protein sequence ID" value="AAU22540.1"/>
    <property type="molecule type" value="Genomic_DNA"/>
</dbReference>
<dbReference type="SMR" id="Q65M31"/>
<dbReference type="STRING" id="279010.BL03177"/>
<dbReference type="KEGG" id="bld:BLi00975"/>
<dbReference type="KEGG" id="bli:BL03177"/>
<dbReference type="eggNOG" id="COG1823">
    <property type="taxonomic scope" value="Bacteria"/>
</dbReference>
<dbReference type="HOGENOM" id="CLU_019375_0_1_9"/>
<dbReference type="Proteomes" id="UP000000606">
    <property type="component" value="Chromosome"/>
</dbReference>
<dbReference type="GO" id="GO:0005886">
    <property type="term" value="C:plasma membrane"/>
    <property type="evidence" value="ECO:0007669"/>
    <property type="project" value="TreeGrafter"/>
</dbReference>
<dbReference type="GO" id="GO:0015184">
    <property type="term" value="F:L-cystine transmembrane transporter activity"/>
    <property type="evidence" value="ECO:0007669"/>
    <property type="project" value="TreeGrafter"/>
</dbReference>
<dbReference type="GO" id="GO:0015293">
    <property type="term" value="F:symporter activity"/>
    <property type="evidence" value="ECO:0007669"/>
    <property type="project" value="InterPro"/>
</dbReference>
<dbReference type="FunFam" id="1.10.3860.10:FF:000004">
    <property type="entry name" value="L-cystine transporter tcyP"/>
    <property type="match status" value="1"/>
</dbReference>
<dbReference type="Gene3D" id="1.10.3860.10">
    <property type="entry name" value="Sodium:dicarboxylate symporter"/>
    <property type="match status" value="1"/>
</dbReference>
<dbReference type="InterPro" id="IPR001991">
    <property type="entry name" value="Na-dicarboxylate_symporter"/>
</dbReference>
<dbReference type="InterPro" id="IPR036458">
    <property type="entry name" value="Na:dicarbo_symporter_sf"/>
</dbReference>
<dbReference type="PANTHER" id="PTHR42865:SF5">
    <property type="entry name" value="L-CYSTINE TRANSPORTER TCYP"/>
    <property type="match status" value="1"/>
</dbReference>
<dbReference type="PANTHER" id="PTHR42865">
    <property type="entry name" value="PROTON/GLUTAMATE-ASPARTATE SYMPORTER"/>
    <property type="match status" value="1"/>
</dbReference>
<dbReference type="Pfam" id="PF00375">
    <property type="entry name" value="SDF"/>
    <property type="match status" value="1"/>
</dbReference>
<dbReference type="PRINTS" id="PR00173">
    <property type="entry name" value="EDTRNSPORT"/>
</dbReference>
<dbReference type="SUPFAM" id="SSF118215">
    <property type="entry name" value="Proton glutamate symport protein"/>
    <property type="match status" value="1"/>
</dbReference>
<gene>
    <name type="primary">tcyP</name>
    <name type="synonym">yhcL</name>
    <name type="ordered locus">BLi00975</name>
    <name type="ordered locus">BL03177</name>
</gene>
<sequence length="461" mass="48892">MTLFVVINIIVMLGLMALLYMMQKKHVSFSKRVFTALGIGIVFGFALHFIYGSSSETITQTSDWFNIAGGGYVKLLQMIVMPLVFISILGAFTKLKLTHNIGKISGLIIGLLIATTAVAAAVGIASALAFDLQAVHVDQGQAETMRGAELEQKSQDMEAKTLPQQIVELLPGNPFLDFTGARPTSTIAVVIFAAFLGIAYLGVNRKQPEQAELFKKMVDAVYAIIMRVVTLILRLTPYGVLAIMTKTIATSDLDSIAKLGKFVIASYAALIVMFIIHLLLITFSGLNPVTYLKKAFPVLVFAFTSRSSAGALPLNIKTQRSLGVPEGIANFAGSFGLSIGQNGCAGIYPAMLAIMIAPTVGQNPLDPSFLFTVIAVVAISSFGVAGVGGGATFAALLVLSALNMPVALAGLLISVEPLIDMGRTALNVSGSMTSGLVTSKVTNELEKDTYQDRTNIIEAEV</sequence>
<accession>Q65M31</accession>
<accession>Q62XG8</accession>
<comment type="function">
    <text evidence="1">Mediates uptake of L-cystine, the oxidized form of L-cysteine.</text>
</comment>
<comment type="subcellular location">
    <subcellularLocation>
        <location evidence="3">Membrane</location>
        <topology evidence="3">Multi-pass membrane protein</topology>
    </subcellularLocation>
</comment>
<comment type="similarity">
    <text evidence="3">Belongs to the dicarboxylate/amino acid:cation symporter (DAACS) (TC 2.A.23) family.</text>
</comment>